<evidence type="ECO:0000250" key="1">
    <source>
        <dbReference type="UniProtKB" id="Q09PK2"/>
    </source>
</evidence>
<evidence type="ECO:0000255" key="2"/>
<evidence type="ECO:0000255" key="3">
    <source>
        <dbReference type="PROSITE-ProRule" id="PRU00275"/>
    </source>
</evidence>
<evidence type="ECO:0000255" key="4">
    <source>
        <dbReference type="PROSITE-ProRule" id="PRU10094"/>
    </source>
</evidence>
<evidence type="ECO:0000269" key="5">
    <source>
    </source>
</evidence>
<evidence type="ECO:0000269" key="6">
    <source>
    </source>
</evidence>
<evidence type="ECO:0000269" key="7">
    <source>
    </source>
</evidence>
<evidence type="ECO:0000269" key="8">
    <source>
    </source>
</evidence>
<evidence type="ECO:0000269" key="9">
    <source>
    </source>
</evidence>
<evidence type="ECO:0000303" key="10">
    <source>
    </source>
</evidence>
<evidence type="ECO:0000305" key="11"/>
<evidence type="ECO:0000312" key="12">
    <source>
        <dbReference type="EMBL" id="AAH94000.1"/>
    </source>
</evidence>
<evidence type="ECO:0000312" key="13">
    <source>
        <dbReference type="EMBL" id="AAY24017.1"/>
    </source>
</evidence>
<evidence type="ECO:0000312" key="14">
    <source>
        <dbReference type="EMBL" id="BAB71067.1"/>
    </source>
</evidence>
<evidence type="ECO:0000312" key="15">
    <source>
        <dbReference type="EMBL" id="BAB71587.1"/>
    </source>
</evidence>
<evidence type="ECO:0000312" key="16">
    <source>
        <dbReference type="HGNC" id="HGNC:26321"/>
    </source>
</evidence>
<organism>
    <name type="scientific">Homo sapiens</name>
    <name type="common">Human</name>
    <dbReference type="NCBI Taxonomy" id="9606"/>
    <lineage>
        <taxon>Eukaryota</taxon>
        <taxon>Metazoa</taxon>
        <taxon>Chordata</taxon>
        <taxon>Craniata</taxon>
        <taxon>Vertebrata</taxon>
        <taxon>Euteleostomi</taxon>
        <taxon>Mammalia</taxon>
        <taxon>Eutheria</taxon>
        <taxon>Euarchontoglires</taxon>
        <taxon>Primates</taxon>
        <taxon>Haplorrhini</taxon>
        <taxon>Catarrhini</taxon>
        <taxon>Hominidae</taxon>
        <taxon>Homo</taxon>
    </lineage>
</organism>
<protein>
    <recommendedName>
        <fullName evidence="11">Retroviral-like aspartic protease 1</fullName>
        <ecNumber>3.4.23.-</ecNumber>
    </recommendedName>
    <alternativeName>
        <fullName>Skin-specific retroviral-like aspartic protease</fullName>
        <shortName>SASPase</shortName>
        <shortName>Skin aspartic protease</shortName>
    </alternativeName>
    <alternativeName>
        <fullName>TPA-inducible aspartic proteinase-like protein</fullName>
        <shortName>TAPS</shortName>
    </alternativeName>
</protein>
<proteinExistence type="evidence at protein level"/>
<feature type="propeptide" id="PRO_0000271170" evidence="7">
    <location>
        <begin position="1"/>
        <end position="190"/>
    </location>
</feature>
<feature type="chain" id="PRO_0000271171" description="Retroviral-like aspartic protease 1" evidence="7">
    <location>
        <begin position="191"/>
        <end position="326"/>
    </location>
</feature>
<feature type="propeptide" id="PRO_0000271172" evidence="7">
    <location>
        <begin position="327"/>
        <end position="343"/>
    </location>
</feature>
<feature type="topological domain" description="Cytoplasmic" evidence="2">
    <location>
        <begin position="1"/>
        <end position="55"/>
    </location>
</feature>
<feature type="transmembrane region" description="Helical" evidence="2">
    <location>
        <begin position="56"/>
        <end position="76"/>
    </location>
</feature>
<feature type="topological domain" description="Extracellular" evidence="2">
    <location>
        <begin position="77"/>
        <end position="343"/>
    </location>
</feature>
<feature type="domain" description="Peptidase A2" evidence="3">
    <location>
        <begin position="207"/>
        <end position="288"/>
    </location>
</feature>
<feature type="active site" evidence="4">
    <location>
        <position position="212"/>
    </location>
</feature>
<feature type="glycosylation site" description="N-linked (GlcNAc...) asparagine" evidence="2">
    <location>
        <position position="276"/>
    </location>
</feature>
<feature type="splice variant" id="VSP_061434" description="In isoform 2.">
    <location>
        <begin position="1"/>
        <end position="84"/>
    </location>
</feature>
<feature type="sequence variant" id="VAR_051508" description="In dbSNP:rs3796097." evidence="5 6">
    <original>T</original>
    <variation>A</variation>
    <location>
        <position position="49"/>
    </location>
</feature>
<feature type="sequence variant" id="VAR_084554" description="In ADLI; impairs filaggrin cleavage." evidence="9">
    <original>K</original>
    <variation>E</variation>
    <location>
        <position position="199"/>
    </location>
</feature>
<feature type="sequence variant" id="VAR_084555" description="In ADLI; impairs filaggrin cleavage." evidence="9">
    <original>R</original>
    <variation>P</variation>
    <location>
        <position position="311"/>
    </location>
</feature>
<feature type="sequence variant" id="VAR_084556" description="In ADLI; impairs filaggrin cleavage." evidence="9">
    <original>P</original>
    <variation>T</variation>
    <location>
        <position position="314"/>
    </location>
</feature>
<feature type="mutagenesis site" description="Abolishes production of active form of enzyme." evidence="7">
    <original>D</original>
    <variation>A</variation>
    <variation>E</variation>
    <location>
        <position position="212"/>
    </location>
</feature>
<feature type="sequence conflict" description="In Ref. 2; BAB71587." evidence="11" ref="2">
    <original>Q</original>
    <variation>R</variation>
    <location>
        <position position="31"/>
    </location>
</feature>
<sequence length="343" mass="36991">MGSPGASLGIKKALQSEQATALPASAPAVSQPTAPAPSCLPKAGQVIPTLLREAPFSSVIAPTLLCGFLFLAWVAAEVPEESSRMAGSGARSEEGRRQHAFVPEPFDGANVVPNLWLHSFEVINDLNHWDHITKLRFLKESLRGEALGVYNRLSPQDQGDYGTVKEALLKAFGVPGAAPSHLPKEIVFANSMGKGYYLKGKIGKVPVRFLVDSGAQVSVVHPNLWEEVTDGDLDTLQPFENVVKVANGAEMKILGVWDTAVSLGKLKLKAQFLVANASAEEAIIGTDVLQDHNAILDFEHRTCTLKGKKFRLLPVGGSLEDEFDLELIEEDPSSEEGRQELSH</sequence>
<reference evidence="11" key="1">
    <citation type="journal article" date="2005" name="J. Invest. Dermatol.">
        <title>Identification and characterization of a novel retroviral-like aspartic protease specifically expressed in human epidermis.</title>
        <authorList>
            <person name="Bernard D."/>
            <person name="Mehul B."/>
            <person name="Thomas-Collignon A."/>
            <person name="Delattre C."/>
            <person name="Donovan M."/>
            <person name="Schmidt R."/>
        </authorList>
    </citation>
    <scope>NUCLEOTIDE SEQUENCE [MRNA]</scope>
    <scope>PARTIAL PROTEIN SEQUENCE</scope>
    <scope>TISSUE SPECIFICITY</scope>
    <scope>AUTOCATALYTIC CLEAVAGE</scope>
    <scope>MUTAGENESIS OF ASP-212</scope>
    <source>
        <tissue evidence="7">Epidermis</tissue>
    </source>
</reference>
<reference evidence="14" key="2">
    <citation type="journal article" date="2004" name="Nat. Genet.">
        <title>Complete sequencing and characterization of 21,243 full-length human cDNAs.</title>
        <authorList>
            <person name="Ota T."/>
            <person name="Suzuki Y."/>
            <person name="Nishikawa T."/>
            <person name="Otsuki T."/>
            <person name="Sugiyama T."/>
            <person name="Irie R."/>
            <person name="Wakamatsu A."/>
            <person name="Hayashi K."/>
            <person name="Sato H."/>
            <person name="Nagai K."/>
            <person name="Kimura K."/>
            <person name="Makita H."/>
            <person name="Sekine M."/>
            <person name="Obayashi M."/>
            <person name="Nishi T."/>
            <person name="Shibahara T."/>
            <person name="Tanaka T."/>
            <person name="Ishii S."/>
            <person name="Yamamoto J."/>
            <person name="Saito K."/>
            <person name="Kawai Y."/>
            <person name="Isono Y."/>
            <person name="Nakamura Y."/>
            <person name="Nagahari K."/>
            <person name="Murakami K."/>
            <person name="Yasuda T."/>
            <person name="Iwayanagi T."/>
            <person name="Wagatsuma M."/>
            <person name="Shiratori A."/>
            <person name="Sudo H."/>
            <person name="Hosoiri T."/>
            <person name="Kaku Y."/>
            <person name="Kodaira H."/>
            <person name="Kondo H."/>
            <person name="Sugawara M."/>
            <person name="Takahashi M."/>
            <person name="Kanda K."/>
            <person name="Yokoi T."/>
            <person name="Furuya T."/>
            <person name="Kikkawa E."/>
            <person name="Omura Y."/>
            <person name="Abe K."/>
            <person name="Kamihara K."/>
            <person name="Katsuta N."/>
            <person name="Sato K."/>
            <person name="Tanikawa M."/>
            <person name="Yamazaki M."/>
            <person name="Ninomiya K."/>
            <person name="Ishibashi T."/>
            <person name="Yamashita H."/>
            <person name="Murakawa K."/>
            <person name="Fujimori K."/>
            <person name="Tanai H."/>
            <person name="Kimata M."/>
            <person name="Watanabe M."/>
            <person name="Hiraoka S."/>
            <person name="Chiba Y."/>
            <person name="Ishida S."/>
            <person name="Ono Y."/>
            <person name="Takiguchi S."/>
            <person name="Watanabe S."/>
            <person name="Yosida M."/>
            <person name="Hotuta T."/>
            <person name="Kusano J."/>
            <person name="Kanehori K."/>
            <person name="Takahashi-Fujii A."/>
            <person name="Hara H."/>
            <person name="Tanase T.-O."/>
            <person name="Nomura Y."/>
            <person name="Togiya S."/>
            <person name="Komai F."/>
            <person name="Hara R."/>
            <person name="Takeuchi K."/>
            <person name="Arita M."/>
            <person name="Imose N."/>
            <person name="Musashino K."/>
            <person name="Yuuki H."/>
            <person name="Oshima A."/>
            <person name="Sasaki N."/>
            <person name="Aotsuka S."/>
            <person name="Yoshikawa Y."/>
            <person name="Matsunawa H."/>
            <person name="Ichihara T."/>
            <person name="Shiohata N."/>
            <person name="Sano S."/>
            <person name="Moriya S."/>
            <person name="Momiyama H."/>
            <person name="Satoh N."/>
            <person name="Takami S."/>
            <person name="Terashima Y."/>
            <person name="Suzuki O."/>
            <person name="Nakagawa S."/>
            <person name="Senoh A."/>
            <person name="Mizoguchi H."/>
            <person name="Goto Y."/>
            <person name="Shimizu F."/>
            <person name="Wakebe H."/>
            <person name="Hishigaki H."/>
            <person name="Watanabe T."/>
            <person name="Sugiyama A."/>
            <person name="Takemoto M."/>
            <person name="Kawakami B."/>
            <person name="Yamazaki M."/>
            <person name="Watanabe K."/>
            <person name="Kumagai A."/>
            <person name="Itakura S."/>
            <person name="Fukuzumi Y."/>
            <person name="Fujimori Y."/>
            <person name="Komiyama M."/>
            <person name="Tashiro H."/>
            <person name="Tanigami A."/>
            <person name="Fujiwara T."/>
            <person name="Ono T."/>
            <person name="Yamada K."/>
            <person name="Fujii Y."/>
            <person name="Ozaki K."/>
            <person name="Hirao M."/>
            <person name="Ohmori Y."/>
            <person name="Kawabata A."/>
            <person name="Hikiji T."/>
            <person name="Kobatake N."/>
            <person name="Inagaki H."/>
            <person name="Ikema Y."/>
            <person name="Okamoto S."/>
            <person name="Okitani R."/>
            <person name="Kawakami T."/>
            <person name="Noguchi S."/>
            <person name="Itoh T."/>
            <person name="Shigeta K."/>
            <person name="Senba T."/>
            <person name="Matsumura K."/>
            <person name="Nakajima Y."/>
            <person name="Mizuno T."/>
            <person name="Morinaga M."/>
            <person name="Sasaki M."/>
            <person name="Togashi T."/>
            <person name="Oyama M."/>
            <person name="Hata H."/>
            <person name="Watanabe M."/>
            <person name="Komatsu T."/>
            <person name="Mizushima-Sugano J."/>
            <person name="Satoh T."/>
            <person name="Shirai Y."/>
            <person name="Takahashi Y."/>
            <person name="Nakagawa K."/>
            <person name="Okumura K."/>
            <person name="Nagase T."/>
            <person name="Nomura N."/>
            <person name="Kikuchi H."/>
            <person name="Masuho Y."/>
            <person name="Yamashita R."/>
            <person name="Nakai K."/>
            <person name="Yada T."/>
            <person name="Nakamura Y."/>
            <person name="Ohara O."/>
            <person name="Isogai T."/>
            <person name="Sugano S."/>
        </authorList>
    </citation>
    <scope>NUCLEOTIDE SEQUENCE [LARGE SCALE MRNA]</scope>
    <scope>VARIANT ALA-49</scope>
    <source>
        <tissue evidence="15">Cerebellum</tissue>
        <tissue evidence="14">Teratocarcinoma</tissue>
    </source>
</reference>
<reference evidence="13" key="3">
    <citation type="journal article" date="2005" name="Nature">
        <title>Generation and annotation of the DNA sequences of human chromosomes 2 and 4.</title>
        <authorList>
            <person name="Hillier L.W."/>
            <person name="Graves T.A."/>
            <person name="Fulton R.S."/>
            <person name="Fulton L.A."/>
            <person name="Pepin K.H."/>
            <person name="Minx P."/>
            <person name="Wagner-McPherson C."/>
            <person name="Layman D."/>
            <person name="Wylie K."/>
            <person name="Sekhon M."/>
            <person name="Becker M.C."/>
            <person name="Fewell G.A."/>
            <person name="Delehaunty K.D."/>
            <person name="Miner T.L."/>
            <person name="Nash W.E."/>
            <person name="Kremitzki C."/>
            <person name="Oddy L."/>
            <person name="Du H."/>
            <person name="Sun H."/>
            <person name="Bradshaw-Cordum H."/>
            <person name="Ali J."/>
            <person name="Carter J."/>
            <person name="Cordes M."/>
            <person name="Harris A."/>
            <person name="Isak A."/>
            <person name="van Brunt A."/>
            <person name="Nguyen C."/>
            <person name="Du F."/>
            <person name="Courtney L."/>
            <person name="Kalicki J."/>
            <person name="Ozersky P."/>
            <person name="Abbott S."/>
            <person name="Armstrong J."/>
            <person name="Belter E.A."/>
            <person name="Caruso L."/>
            <person name="Cedroni M."/>
            <person name="Cotton M."/>
            <person name="Davidson T."/>
            <person name="Desai A."/>
            <person name="Elliott G."/>
            <person name="Erb T."/>
            <person name="Fronick C."/>
            <person name="Gaige T."/>
            <person name="Haakenson W."/>
            <person name="Haglund K."/>
            <person name="Holmes A."/>
            <person name="Harkins R."/>
            <person name="Kim K."/>
            <person name="Kruchowski S.S."/>
            <person name="Strong C.M."/>
            <person name="Grewal N."/>
            <person name="Goyea E."/>
            <person name="Hou S."/>
            <person name="Levy A."/>
            <person name="Martinka S."/>
            <person name="Mead K."/>
            <person name="McLellan M.D."/>
            <person name="Meyer R."/>
            <person name="Randall-Maher J."/>
            <person name="Tomlinson C."/>
            <person name="Dauphin-Kohlberg S."/>
            <person name="Kozlowicz-Reilly A."/>
            <person name="Shah N."/>
            <person name="Swearengen-Shahid S."/>
            <person name="Snider J."/>
            <person name="Strong J.T."/>
            <person name="Thompson J."/>
            <person name="Yoakum M."/>
            <person name="Leonard S."/>
            <person name="Pearman C."/>
            <person name="Trani L."/>
            <person name="Radionenko M."/>
            <person name="Waligorski J.E."/>
            <person name="Wang C."/>
            <person name="Rock S.M."/>
            <person name="Tin-Wollam A.-M."/>
            <person name="Maupin R."/>
            <person name="Latreille P."/>
            <person name="Wendl M.C."/>
            <person name="Yang S.-P."/>
            <person name="Pohl C."/>
            <person name="Wallis J.W."/>
            <person name="Spieth J."/>
            <person name="Bieri T.A."/>
            <person name="Berkowicz N."/>
            <person name="Nelson J.O."/>
            <person name="Osborne J."/>
            <person name="Ding L."/>
            <person name="Meyer R."/>
            <person name="Sabo A."/>
            <person name="Shotland Y."/>
            <person name="Sinha P."/>
            <person name="Wohldmann P.E."/>
            <person name="Cook L.L."/>
            <person name="Hickenbotham M.T."/>
            <person name="Eldred J."/>
            <person name="Williams D."/>
            <person name="Jones T.A."/>
            <person name="She X."/>
            <person name="Ciccarelli F.D."/>
            <person name="Izaurralde E."/>
            <person name="Taylor J."/>
            <person name="Schmutz J."/>
            <person name="Myers R.M."/>
            <person name="Cox D.R."/>
            <person name="Huang X."/>
            <person name="McPherson J.D."/>
            <person name="Mardis E.R."/>
            <person name="Clifton S.W."/>
            <person name="Warren W.C."/>
            <person name="Chinwalla A.T."/>
            <person name="Eddy S.R."/>
            <person name="Marra M.A."/>
            <person name="Ovcharenko I."/>
            <person name="Furey T.S."/>
            <person name="Miller W."/>
            <person name="Eichler E.E."/>
            <person name="Bork P."/>
            <person name="Suyama M."/>
            <person name="Torrents D."/>
            <person name="Waterston R.H."/>
            <person name="Wilson R.K."/>
        </authorList>
    </citation>
    <scope>NUCLEOTIDE SEQUENCE [LARGE SCALE GENOMIC DNA]</scope>
</reference>
<reference evidence="12" key="4">
    <citation type="journal article" date="2004" name="Genome Res.">
        <title>The status, quality, and expansion of the NIH full-length cDNA project: the Mammalian Gene Collection (MGC).</title>
        <authorList>
            <consortium name="The MGC Project Team"/>
        </authorList>
    </citation>
    <scope>NUCLEOTIDE SEQUENCE [LARGE SCALE MRNA]</scope>
    <scope>VARIANT ALA-49</scope>
    <source>
        <tissue>Skin</tissue>
    </source>
</reference>
<reference evidence="11" key="5">
    <citation type="journal article" date="2006" name="Am. J. Pathol.">
        <title>A novel aspartic proteinase-like gene expressed in stratified epithelia and squamous cell carcinoma of the skin.</title>
        <authorList>
            <person name="Rhiemeier V."/>
            <person name="Breitenbach U."/>
            <person name="Richter K.H."/>
            <person name="Gebhardt C."/>
            <person name="Vogt I."/>
            <person name="Hartenstein B."/>
            <person name="Fuerstenberger G."/>
            <person name="Mauch C."/>
            <person name="Hess J."/>
            <person name="Angel P."/>
        </authorList>
    </citation>
    <scope>TISSUE SPECIFICITY</scope>
</reference>
<reference key="6">
    <citation type="journal article" date="2020" name="Am. J. Hum. Genet.">
        <title>Mutations in ASPRV1 cause dominantly inherited ichthyosis.</title>
        <authorList>
            <person name="Boyden L.M."/>
            <person name="Zhou J."/>
            <person name="Hu R."/>
            <person name="Zaki T."/>
            <person name="Loring E."/>
            <person name="Scott J."/>
            <person name="Traupe H."/>
            <person name="Paller A.S."/>
            <person name="Lifton R.P."/>
            <person name="Choate K.A."/>
        </authorList>
    </citation>
    <scope>FUNCTION</scope>
    <scope>INVOLVEMENT IN ADLI</scope>
    <scope>VARIANTS ADLI GLU-199; PRO-311 AND THR-314</scope>
    <scope>CHARACTERIZATION OF VARIANTS ADLI GLU-199; PRO-311 AND THR-314</scope>
</reference>
<gene>
    <name evidence="16" type="primary">ASPRV1</name>
    <name evidence="10" type="synonym">SASP</name>
</gene>
<name>APRV1_HUMAN</name>
<comment type="function">
    <text evidence="9">Protease responsible for filaggrin processing, essential for the maintenance of a proper epidermis organization.</text>
</comment>
<comment type="subunit">
    <text evidence="1 11">Homodimer.</text>
</comment>
<comment type="subcellular location">
    <subcellularLocation>
        <location evidence="2">Membrane</location>
        <topology evidence="2">Single-pass membrane protein</topology>
    </subcellularLocation>
</comment>
<comment type="alternative products">
    <event type="alternative initiation"/>
    <isoform>
        <id>Q53RT3-1</id>
        <name>1</name>
        <sequence type="displayed"/>
    </isoform>
    <isoform>
        <id>Q53RT3-2</id>
        <name>2</name>
        <sequence type="described" ref="VSP_061434"/>
    </isoform>
</comment>
<comment type="tissue specificity">
    <text evidence="7 8">Expressed primarily in the granular layer of the epidermis and inner root sheath of hair follicles. In psoriatic skin, expressed throughout the stratum corneum. In ulcerated skin, expressed in the stratum granulosum of intact epidermis but almost absent from ulcerated regions. Expressed in differentiated areas of squamous cell carcinomas but not in undifferentiated tumors.</text>
</comment>
<comment type="PTM">
    <text evidence="7">Undergoes autocleavage which is necessary for activation of the protein.</text>
</comment>
<comment type="disease" evidence="9">
    <disease id="DI-05901">
        <name>Ichthyosis, lamellar, autosomal dominant</name>
        <acronym>ADLI</acronym>
        <description>An autosomal dominant form of ichthyosis, a disorder of keratinization with abnormal differentiation and desquamation of the epidermis, resulting in abnormal skin scaling. ADLI is characterized by onset at birth or within the first months of life, skin scaling on the entire body with relative sparing of face, anterior chest, and abdomen, and palmoplantar keratoderma. Patients may manifest mild erythema and moderate pruritus.</description>
        <dbReference type="MIM" id="146750"/>
    </disease>
    <text>The disease is caused by variants affecting the gene represented in this entry.</text>
</comment>
<comment type="caution">
    <text evidence="11">It is uncertain whether Met-1 or Met-85 is the initiator.</text>
</comment>
<keyword id="KW-0024">Alternative initiation</keyword>
<keyword id="KW-0064">Aspartyl protease</keyword>
<keyword id="KW-0068">Autocatalytic cleavage</keyword>
<keyword id="KW-0903">Direct protein sequencing</keyword>
<keyword id="KW-0225">Disease variant</keyword>
<keyword id="KW-0325">Glycoprotein</keyword>
<keyword id="KW-0378">Hydrolase</keyword>
<keyword id="KW-0977">Ichthyosis</keyword>
<keyword id="KW-0472">Membrane</keyword>
<keyword id="KW-0645">Protease</keyword>
<keyword id="KW-1267">Proteomics identification</keyword>
<keyword id="KW-1185">Reference proteome</keyword>
<keyword id="KW-0812">Transmembrane</keyword>
<keyword id="KW-1133">Transmembrane helix</keyword>
<dbReference type="EC" id="3.4.23.-"/>
<dbReference type="EMBL" id="AK055994">
    <property type="protein sequence ID" value="BAB71067.1"/>
    <property type="molecule type" value="mRNA"/>
</dbReference>
<dbReference type="EMBL" id="AK057813">
    <property type="protein sequence ID" value="BAB71587.1"/>
    <property type="molecule type" value="mRNA"/>
</dbReference>
<dbReference type="EMBL" id="AC079811">
    <property type="protein sequence ID" value="AAY24017.1"/>
    <property type="molecule type" value="Genomic_DNA"/>
</dbReference>
<dbReference type="EMBL" id="BC031997">
    <property type="protein sequence ID" value="AAH31997.2"/>
    <property type="molecule type" value="mRNA"/>
</dbReference>
<dbReference type="EMBL" id="BC094002">
    <property type="protein sequence ID" value="AAH94002.1"/>
    <property type="molecule type" value="mRNA"/>
</dbReference>
<dbReference type="EMBL" id="BC094000">
    <property type="protein sequence ID" value="AAH94000.1"/>
    <property type="molecule type" value="mRNA"/>
</dbReference>
<dbReference type="CCDS" id="CCDS1897.2">
    <molecule id="Q53RT3-2"/>
</dbReference>
<dbReference type="RefSeq" id="NP_690005.3">
    <molecule id="Q53RT3-2"/>
    <property type="nucleotide sequence ID" value="NM_152792.4"/>
</dbReference>
<dbReference type="SMR" id="Q53RT3"/>
<dbReference type="BioGRID" id="127385">
    <property type="interactions" value="50"/>
</dbReference>
<dbReference type="FunCoup" id="Q53RT3">
    <property type="interactions" value="165"/>
</dbReference>
<dbReference type="IntAct" id="Q53RT3">
    <property type="interactions" value="18"/>
</dbReference>
<dbReference type="STRING" id="9606.ENSP00000315383"/>
<dbReference type="MEROPS" id="A28.004"/>
<dbReference type="GlyCosmos" id="Q53RT3">
    <property type="glycosylation" value="1 site, No reported glycans"/>
</dbReference>
<dbReference type="GlyGen" id="Q53RT3">
    <property type="glycosylation" value="1 site"/>
</dbReference>
<dbReference type="iPTMnet" id="Q53RT3"/>
<dbReference type="PhosphoSitePlus" id="Q53RT3"/>
<dbReference type="BioMuta" id="ASPRV1"/>
<dbReference type="DMDM" id="74726595"/>
<dbReference type="jPOST" id="Q53RT3"/>
<dbReference type="MassIVE" id="Q53RT3"/>
<dbReference type="PaxDb" id="9606-ENSP00000315383"/>
<dbReference type="PeptideAtlas" id="Q53RT3"/>
<dbReference type="ProteomicsDB" id="62526"/>
<dbReference type="Pumba" id="Q53RT3"/>
<dbReference type="Antibodypedia" id="31062">
    <property type="antibodies" value="78 antibodies from 22 providers"/>
</dbReference>
<dbReference type="DNASU" id="151516"/>
<dbReference type="Ensembl" id="ENST00000320256.6">
    <molecule id="Q53RT3-2"/>
    <property type="protein sequence ID" value="ENSP00000315383.5"/>
    <property type="gene ID" value="ENSG00000244617.3"/>
</dbReference>
<dbReference type="GeneID" id="151516"/>
<dbReference type="KEGG" id="hsa:151516"/>
<dbReference type="MANE-Select" id="ENST00000320256.6">
    <molecule id="Q53RT3-2"/>
    <property type="protein sequence ID" value="ENSP00000315383.5"/>
    <property type="RefSeq nucleotide sequence ID" value="NM_152792.4"/>
    <property type="RefSeq protein sequence ID" value="NP_690005.3"/>
</dbReference>
<dbReference type="UCSC" id="uc002sfz.6">
    <molecule id="Q53RT3-1"/>
    <property type="organism name" value="human"/>
</dbReference>
<dbReference type="AGR" id="HGNC:26321"/>
<dbReference type="CTD" id="151516"/>
<dbReference type="DisGeNET" id="151516"/>
<dbReference type="GeneCards" id="ASPRV1"/>
<dbReference type="HGNC" id="HGNC:26321">
    <property type="gene designation" value="ASPRV1"/>
</dbReference>
<dbReference type="HPA" id="ENSG00000244617">
    <property type="expression patterns" value="Tissue enriched (skin)"/>
</dbReference>
<dbReference type="MalaCards" id="ASPRV1"/>
<dbReference type="MIM" id="146750">
    <property type="type" value="phenotype"/>
</dbReference>
<dbReference type="MIM" id="611765">
    <property type="type" value="gene"/>
</dbReference>
<dbReference type="neXtProt" id="NX_Q53RT3"/>
<dbReference type="OpenTargets" id="ENSG00000244617"/>
<dbReference type="Orphanet" id="313">
    <property type="disease" value="Lamellar ichthyosis"/>
</dbReference>
<dbReference type="PharmGKB" id="PA162376919"/>
<dbReference type="VEuPathDB" id="HostDB:ENSG00000244617"/>
<dbReference type="eggNOG" id="ENOG502SQVT">
    <property type="taxonomic scope" value="Eukaryota"/>
</dbReference>
<dbReference type="GeneTree" id="ENSGT00390000017260"/>
<dbReference type="HOGENOM" id="CLU_846072_0_0_1"/>
<dbReference type="InParanoid" id="Q53RT3"/>
<dbReference type="OMA" id="DQGDYGT"/>
<dbReference type="OrthoDB" id="775972at2759"/>
<dbReference type="PAN-GO" id="Q53RT3">
    <property type="GO annotations" value="0 GO annotations based on evolutionary models"/>
</dbReference>
<dbReference type="PhylomeDB" id="Q53RT3"/>
<dbReference type="TreeFam" id="TF337956"/>
<dbReference type="PathwayCommons" id="Q53RT3"/>
<dbReference type="SignaLink" id="Q53RT3"/>
<dbReference type="BioGRID-ORCS" id="151516">
    <property type="hits" value="13 hits in 1149 CRISPR screens"/>
</dbReference>
<dbReference type="GenomeRNAi" id="151516"/>
<dbReference type="Pharos" id="Q53RT3">
    <property type="development level" value="Tbio"/>
</dbReference>
<dbReference type="PRO" id="PR:Q53RT3"/>
<dbReference type="Proteomes" id="UP000005640">
    <property type="component" value="Chromosome 2"/>
</dbReference>
<dbReference type="RNAct" id="Q53RT3">
    <property type="molecule type" value="protein"/>
</dbReference>
<dbReference type="Bgee" id="ENSG00000244617">
    <property type="expression patterns" value="Expressed in upper arm skin and 127 other cell types or tissues"/>
</dbReference>
<dbReference type="GO" id="GO:0016020">
    <property type="term" value="C:membrane"/>
    <property type="evidence" value="ECO:0000303"/>
    <property type="project" value="UniProtKB"/>
</dbReference>
<dbReference type="GO" id="GO:0004190">
    <property type="term" value="F:aspartic-type endopeptidase activity"/>
    <property type="evidence" value="ECO:0000314"/>
    <property type="project" value="UniProtKB"/>
</dbReference>
<dbReference type="GO" id="GO:0016485">
    <property type="term" value="P:protein processing"/>
    <property type="evidence" value="ECO:0000314"/>
    <property type="project" value="UniProtKB"/>
</dbReference>
<dbReference type="GO" id="GO:0043588">
    <property type="term" value="P:skin development"/>
    <property type="evidence" value="ECO:0000250"/>
    <property type="project" value="UniProtKB"/>
</dbReference>
<dbReference type="CDD" id="cd00303">
    <property type="entry name" value="retropepsin_like"/>
    <property type="match status" value="1"/>
</dbReference>
<dbReference type="FunFam" id="2.40.70.10:FF:000043">
    <property type="entry name" value="retroviral-like aspartic protease 1 isoform X3"/>
    <property type="match status" value="1"/>
</dbReference>
<dbReference type="Gene3D" id="2.40.70.10">
    <property type="entry name" value="Acid Proteases"/>
    <property type="match status" value="1"/>
</dbReference>
<dbReference type="InterPro" id="IPR001969">
    <property type="entry name" value="Aspartic_peptidase_AS"/>
</dbReference>
<dbReference type="InterPro" id="IPR033539">
    <property type="entry name" value="Asprv1"/>
</dbReference>
<dbReference type="InterPro" id="IPR001995">
    <property type="entry name" value="Peptidase_A2_cat"/>
</dbReference>
<dbReference type="InterPro" id="IPR021109">
    <property type="entry name" value="Peptidase_aspartic_dom_sf"/>
</dbReference>
<dbReference type="PANTHER" id="PTHR37006">
    <property type="entry name" value="RETROVIRAL-LIKE ASPARTIC PROTEASE 1"/>
    <property type="match status" value="1"/>
</dbReference>
<dbReference type="PANTHER" id="PTHR37006:SF1">
    <property type="entry name" value="RETROVIRAL-LIKE ASPARTIC PROTEASE 1"/>
    <property type="match status" value="1"/>
</dbReference>
<dbReference type="Pfam" id="PF13975">
    <property type="entry name" value="gag-asp_proteas"/>
    <property type="match status" value="1"/>
</dbReference>
<dbReference type="SUPFAM" id="SSF50630">
    <property type="entry name" value="Acid proteases"/>
    <property type="match status" value="1"/>
</dbReference>
<dbReference type="PROSITE" id="PS50175">
    <property type="entry name" value="ASP_PROT_RETROV"/>
    <property type="match status" value="1"/>
</dbReference>
<dbReference type="PROSITE" id="PS00141">
    <property type="entry name" value="ASP_PROTEASE"/>
    <property type="match status" value="1"/>
</dbReference>
<accession>Q53RT3</accession>
<accession>Q8N5P2</accession>
<accession>Q96LT3</accession>
<accession>Q96N43</accession>